<comment type="function">
    <text>This protein is essential to promote the specific transfer of the plasmid in the presence of conjugative plasmids.</text>
</comment>
<name>MOBB1_ECOLX</name>
<proteinExistence type="predicted"/>
<protein>
    <recommendedName>
        <fullName>Mobilization protein MobB</fullName>
    </recommendedName>
    <alternativeName>
        <fullName>Protein C</fullName>
    </alternativeName>
</protein>
<geneLocation type="plasmid">
    <name>Clo DF13</name>
</geneLocation>
<reference key="1">
    <citation type="journal article" date="1987" name="Gene">
        <title>Structure and nucleotide sequence of the region encoding the mobilization proteins of plasmid CloDF13.</title>
        <authorList>
            <person name="van Putten A.J."/>
            <person name="Jochems G.J."/>
            <person name="de Lang R."/>
            <person name="Nijkamp H.J.J."/>
        </authorList>
    </citation>
    <scope>NUCLEOTIDE SEQUENCE [GENOMIC DNA]</scope>
</reference>
<reference key="2">
    <citation type="journal article" date="1986" name="Plasmid">
        <title>The complete nucleotide sequence of the bacteriocinogenic plasmid CloDF13.</title>
        <authorList>
            <person name="Nijkamp H.J.J."/>
            <person name="de Lang R."/>
            <person name="Stuitje A.R."/>
            <person name="van den Elsen P.J.M."/>
            <person name="Veltkamp E."/>
            <person name="van Putten A.J."/>
        </authorList>
    </citation>
    <scope>NUCLEOTIDE SEQUENCE [GENOMIC DNA]</scope>
</reference>
<sequence length="148" mass="15933">MILRGCTMALERYNVSQPKRQAERGENTADPALAAGRACSTAELVARRLGIAAVQPVYRFLDTWWRKGCWSGEITRLTAVRSACGADAARGGVLVRRGRAADGHYSVSCRRGVCAQLPRTGWPFELLRLAMEGNSRGAPAGGTCTVLP</sequence>
<gene>
    <name type="primary">mobB</name>
    <name type="synonym">C</name>
</gene>
<keyword id="KW-0184">Conjugation</keyword>
<keyword id="KW-0499">Mobility protein</keyword>
<keyword id="KW-0614">Plasmid</keyword>
<accession>P08097</accession>
<organism>
    <name type="scientific">Escherichia coli</name>
    <dbReference type="NCBI Taxonomy" id="562"/>
    <lineage>
        <taxon>Bacteria</taxon>
        <taxon>Pseudomonadati</taxon>
        <taxon>Pseudomonadota</taxon>
        <taxon>Gammaproteobacteria</taxon>
        <taxon>Enterobacterales</taxon>
        <taxon>Enterobacteriaceae</taxon>
        <taxon>Escherichia</taxon>
    </lineage>
</organism>
<feature type="chain" id="PRO_0000068392" description="Mobilization protein MobB">
    <location>
        <begin position="1"/>
        <end position="148"/>
    </location>
</feature>
<dbReference type="EMBL" id="X04466">
    <property type="protein sequence ID" value="CAA28151.1"/>
    <property type="molecule type" value="Genomic_DNA"/>
</dbReference>
<dbReference type="PIR" id="B29050">
    <property type="entry name" value="MZEC6"/>
</dbReference>
<dbReference type="RefSeq" id="NP_052376.1">
    <property type="nucleotide sequence ID" value="NC_002119.1"/>
</dbReference>
<dbReference type="SMR" id="P08097"/>